<accession>P25082</accession>
<comment type="function">
    <text>Antenna protein that modulates the color of the bioluminescence emission of the luciferase. In the presence of LumP, luciferase emission is shifted to higher energy values (shorter wavelength).</text>
</comment>
<comment type="cofactor">
    <cofactor>
        <name>6,7-dimethyl-8-(1-D-ribityl)lumazine</name>
        <dbReference type="ChEBI" id="CHEBI:58201"/>
    </cofactor>
    <text>Binds 1 6,7-dimethyl-8-(1'-D-ribityl)lumazine non-covalently.</text>
</comment>
<gene>
    <name type="primary">luxL</name>
</gene>
<keyword id="KW-0903">Direct protein sequencing</keyword>
<keyword id="KW-0455">Luminescence</keyword>
<keyword id="KW-0677">Repeat</keyword>
<dbReference type="EMBL" id="M73625">
    <property type="protein sequence ID" value="AAA63445.1"/>
    <property type="molecule type" value="Genomic_DNA"/>
</dbReference>
<dbReference type="PIR" id="A38577">
    <property type="entry name" value="A38577"/>
</dbReference>
<dbReference type="SMR" id="P25082"/>
<dbReference type="GO" id="GO:0004746">
    <property type="term" value="F:riboflavin synthase activity"/>
    <property type="evidence" value="ECO:0007669"/>
    <property type="project" value="TreeGrafter"/>
</dbReference>
<dbReference type="GO" id="GO:0008218">
    <property type="term" value="P:bioluminescence"/>
    <property type="evidence" value="ECO:0007669"/>
    <property type="project" value="UniProtKB-KW"/>
</dbReference>
<dbReference type="GO" id="GO:0009231">
    <property type="term" value="P:riboflavin biosynthetic process"/>
    <property type="evidence" value="ECO:0007669"/>
    <property type="project" value="TreeGrafter"/>
</dbReference>
<dbReference type="CDD" id="cd16256">
    <property type="entry name" value="LumP"/>
    <property type="match status" value="1"/>
</dbReference>
<dbReference type="Gene3D" id="2.40.30.20">
    <property type="match status" value="2"/>
</dbReference>
<dbReference type="InterPro" id="IPR023366">
    <property type="entry name" value="ATP_synth_asu-like_sf"/>
</dbReference>
<dbReference type="InterPro" id="IPR001783">
    <property type="entry name" value="Lumazine-bd"/>
</dbReference>
<dbReference type="InterPro" id="IPR026017">
    <property type="entry name" value="Lumazine-bd_dom"/>
</dbReference>
<dbReference type="InterPro" id="IPR017938">
    <property type="entry name" value="Riboflavin_synthase-like_b-brl"/>
</dbReference>
<dbReference type="PANTHER" id="PTHR21098:SF0">
    <property type="entry name" value="RIBOFLAVIN SYNTHASE"/>
    <property type="match status" value="1"/>
</dbReference>
<dbReference type="PANTHER" id="PTHR21098">
    <property type="entry name" value="RIBOFLAVIN SYNTHASE ALPHA CHAIN"/>
    <property type="match status" value="1"/>
</dbReference>
<dbReference type="Pfam" id="PF00677">
    <property type="entry name" value="Lum_binding"/>
    <property type="match status" value="2"/>
</dbReference>
<dbReference type="PIRSF" id="PIRSF000498">
    <property type="entry name" value="Riboflavin_syn_A"/>
    <property type="match status" value="1"/>
</dbReference>
<dbReference type="SUPFAM" id="SSF63380">
    <property type="entry name" value="Riboflavin synthase domain-like"/>
    <property type="match status" value="2"/>
</dbReference>
<dbReference type="PROSITE" id="PS51177">
    <property type="entry name" value="LUMAZINE_BIND"/>
    <property type="match status" value="2"/>
</dbReference>
<reference key="1">
    <citation type="journal article" date="1991" name="Proc. Natl. Acad. Sci. U.S.A.">
        <title>Borrowed proteins in bacterial bioluminescence.</title>
        <authorList>
            <person name="O'Kane D.J."/>
            <person name="Woodward B."/>
            <person name="Lee J."/>
            <person name="Prasher D.C."/>
        </authorList>
    </citation>
    <scope>NUCLEOTIDE SEQUENCE [GENOMIC DNA]</scope>
    <scope>PARTIAL PROTEIN SEQUENCE</scope>
    <source>
        <strain>A13</strain>
    </source>
</reference>
<sequence length="189" mass="20609">MFKGIVQGVGIIKKISKNDDTQRHGITFPKDILDSVEKDTVMLVNGCSVTVVRITGDVVYFDIDQAINTTTFRKLEVGNKVNLEVRPGFGSLLGKGALTGNIKGVATVDNITEEEDLLKVYIKIPKDLIENISSEDHIGINGVSNSIEEVSNDIICINYPKNLSITTNLGTLETGSEVNVETLNVSNEW</sequence>
<feature type="chain" id="PRO_0000068154" description="Lumazine protein">
    <location>
        <begin position="1"/>
        <end position="189"/>
    </location>
</feature>
<feature type="repeat" description="Lumazine-binding 1">
    <location>
        <begin position="1"/>
        <end position="96"/>
    </location>
</feature>
<feature type="repeat" description="Lumazine-binding 2">
    <location>
        <begin position="97"/>
        <end position="189"/>
    </location>
</feature>
<proteinExistence type="evidence at protein level"/>
<protein>
    <recommendedName>
        <fullName>Lumazine protein</fullName>
        <shortName>LUMP</shortName>
    </recommendedName>
</protein>
<organism>
    <name type="scientific">Photobacterium phosphoreum</name>
    <dbReference type="NCBI Taxonomy" id="659"/>
    <lineage>
        <taxon>Bacteria</taxon>
        <taxon>Pseudomonadati</taxon>
        <taxon>Pseudomonadota</taxon>
        <taxon>Gammaproteobacteria</taxon>
        <taxon>Vibrionales</taxon>
        <taxon>Vibrionaceae</taxon>
        <taxon>Photobacterium</taxon>
    </lineage>
</organism>
<name>LUXP_PHOPO</name>